<feature type="chain" id="PRO_0000092517" description="Putative carbohydrate transport ATP-binding protein MPN_258">
    <location>
        <begin position="1"/>
        <end position="572"/>
    </location>
</feature>
<feature type="domain" description="ABC transporter 1" evidence="2">
    <location>
        <begin position="6"/>
        <end position="253"/>
    </location>
</feature>
<feature type="domain" description="ABC transporter 2" evidence="2">
    <location>
        <begin position="327"/>
        <end position="572"/>
    </location>
</feature>
<feature type="binding site" evidence="2">
    <location>
        <begin position="40"/>
        <end position="47"/>
    </location>
    <ligand>
        <name>ATP</name>
        <dbReference type="ChEBI" id="CHEBI:30616"/>
    </ligand>
</feature>
<name>Y258_MYCPN</name>
<accession>P75516</accession>
<comment type="function">
    <text evidence="1">Part of the ABC transporter complex involved in carbohydrates import. Probably responsible for energy coupling to the transport system (By similarity).</text>
</comment>
<comment type="subcellular location">
    <subcellularLocation>
        <location evidence="3">Cell membrane</location>
        <topology evidence="3">Peripheral membrane protein</topology>
    </subcellularLocation>
</comment>
<comment type="similarity">
    <text evidence="3">Belongs to the ABC transporter superfamily.</text>
</comment>
<reference key="1">
    <citation type="journal article" date="1996" name="Nucleic Acids Res.">
        <title>Complete sequence analysis of the genome of the bacterium Mycoplasma pneumoniae.</title>
        <authorList>
            <person name="Himmelreich R."/>
            <person name="Hilbert H."/>
            <person name="Plagens H."/>
            <person name="Pirkl E."/>
            <person name="Li B.-C."/>
            <person name="Herrmann R."/>
        </authorList>
    </citation>
    <scope>NUCLEOTIDE SEQUENCE [LARGE SCALE GENOMIC DNA]</scope>
    <source>
        <strain>ATCC 29342 / M129 / Subtype 1</strain>
    </source>
</reference>
<proteinExistence type="inferred from homology"/>
<sequence>MSKIAFRMENICKSFDNGRVKANVDVNLTVYENTVHTLLGENGAGKSTLTSILFGLYQPDSGKIFIGEEEVHFKSSKDAVQHKIGMVHQHFKLVDNYTVLDNIILGNESSFSIPFTNGKLKLPLLHRKASEAKIQAMMERYDLHVNLHQKVSRLTVGQQQRVEILKVLFRDSDILIFDEPTAVLSDQEIKSFLNIIKNFKKMGKTIVLISHKLNEIKEVAETATILRQGHSVGTFQIKDTSIDEMARLMMGKELKETKNNTQFTAKGEPVLKVENLHLYLNQNWFYKLIARWNQKRINQLQKQGKPAKTLWLKSWLEGLAAIEKTPRFIRGIVNNLGFGSQQVFDKGISFEIHKGEIFAIAGVEGNGQNQLIDLICGLEKAAPKKVFFNGFDISRYSIRKRINAGIGFVLEDRHKYGLILDQTVRFNAVNNQIDRKQFSSWNFLNQMQIAVYTNQIVDKFDVRGAVQGTAIVRLLSGGNQQKLIIGRELTKQNELLVFAQVTRGLDVGAISFIHQKILDAKKQNNAILLVSYELDEILAIADTIGVINKGNLLEVNKRDVMTRERIGKLIMQ</sequence>
<dbReference type="EMBL" id="U00089">
    <property type="protein sequence ID" value="AAB96223.1"/>
    <property type="molecule type" value="Genomic_DNA"/>
</dbReference>
<dbReference type="PIR" id="S73901">
    <property type="entry name" value="S73901"/>
</dbReference>
<dbReference type="RefSeq" id="NP_109946.1">
    <property type="nucleotide sequence ID" value="NC_000912.1"/>
</dbReference>
<dbReference type="RefSeq" id="WP_010874615.1">
    <property type="nucleotide sequence ID" value="NZ_OU342337.1"/>
</dbReference>
<dbReference type="IntAct" id="P75516">
    <property type="interactions" value="1"/>
</dbReference>
<dbReference type="STRING" id="272634.MPN_258"/>
<dbReference type="EnsemblBacteria" id="AAB96223">
    <property type="protein sequence ID" value="AAB96223"/>
    <property type="gene ID" value="MPN_258"/>
</dbReference>
<dbReference type="KEGG" id="mpn:MPN_258"/>
<dbReference type="PATRIC" id="fig|272634.6.peg.277"/>
<dbReference type="HOGENOM" id="CLU_000604_92_0_14"/>
<dbReference type="OrthoDB" id="9771863at2"/>
<dbReference type="BioCyc" id="MPNE272634:G1GJ3-406-MONOMER"/>
<dbReference type="Proteomes" id="UP000000808">
    <property type="component" value="Chromosome"/>
</dbReference>
<dbReference type="GO" id="GO:0005886">
    <property type="term" value="C:plasma membrane"/>
    <property type="evidence" value="ECO:0007669"/>
    <property type="project" value="UniProtKB-SubCell"/>
</dbReference>
<dbReference type="GO" id="GO:0005524">
    <property type="term" value="F:ATP binding"/>
    <property type="evidence" value="ECO:0007669"/>
    <property type="project" value="UniProtKB-KW"/>
</dbReference>
<dbReference type="GO" id="GO:0016887">
    <property type="term" value="F:ATP hydrolysis activity"/>
    <property type="evidence" value="ECO:0007669"/>
    <property type="project" value="InterPro"/>
</dbReference>
<dbReference type="CDD" id="cd03216">
    <property type="entry name" value="ABC_Carb_Monos_I"/>
    <property type="match status" value="1"/>
</dbReference>
<dbReference type="CDD" id="cd03215">
    <property type="entry name" value="ABC_Carb_Monos_II"/>
    <property type="match status" value="1"/>
</dbReference>
<dbReference type="Gene3D" id="3.40.50.300">
    <property type="entry name" value="P-loop containing nucleotide triphosphate hydrolases"/>
    <property type="match status" value="2"/>
</dbReference>
<dbReference type="InterPro" id="IPR003593">
    <property type="entry name" value="AAA+_ATPase"/>
</dbReference>
<dbReference type="InterPro" id="IPR050107">
    <property type="entry name" value="ABC_carbohydrate_import_ATPase"/>
</dbReference>
<dbReference type="InterPro" id="IPR003439">
    <property type="entry name" value="ABC_transporter-like_ATP-bd"/>
</dbReference>
<dbReference type="InterPro" id="IPR017871">
    <property type="entry name" value="ABC_transporter-like_CS"/>
</dbReference>
<dbReference type="InterPro" id="IPR027417">
    <property type="entry name" value="P-loop_NTPase"/>
</dbReference>
<dbReference type="PANTHER" id="PTHR43790">
    <property type="entry name" value="CARBOHYDRATE TRANSPORT ATP-BINDING PROTEIN MG119-RELATED"/>
    <property type="match status" value="1"/>
</dbReference>
<dbReference type="PANTHER" id="PTHR43790:SF4">
    <property type="entry name" value="GUANOSINE IMPORT ATP-BINDING PROTEIN NUPO"/>
    <property type="match status" value="1"/>
</dbReference>
<dbReference type="Pfam" id="PF00005">
    <property type="entry name" value="ABC_tran"/>
    <property type="match status" value="2"/>
</dbReference>
<dbReference type="SMART" id="SM00382">
    <property type="entry name" value="AAA"/>
    <property type="match status" value="1"/>
</dbReference>
<dbReference type="SUPFAM" id="SSF52540">
    <property type="entry name" value="P-loop containing nucleoside triphosphate hydrolases"/>
    <property type="match status" value="2"/>
</dbReference>
<dbReference type="PROSITE" id="PS00211">
    <property type="entry name" value="ABC_TRANSPORTER_1"/>
    <property type="match status" value="1"/>
</dbReference>
<dbReference type="PROSITE" id="PS50893">
    <property type="entry name" value="ABC_TRANSPORTER_2"/>
    <property type="match status" value="2"/>
</dbReference>
<protein>
    <recommendedName>
        <fullName>Putative carbohydrate transport ATP-binding protein MPN_258</fullName>
    </recommendedName>
</protein>
<keyword id="KW-0067">ATP-binding</keyword>
<keyword id="KW-1003">Cell membrane</keyword>
<keyword id="KW-0472">Membrane</keyword>
<keyword id="KW-0547">Nucleotide-binding</keyword>
<keyword id="KW-1185">Reference proteome</keyword>
<keyword id="KW-0677">Repeat</keyword>
<keyword id="KW-0762">Sugar transport</keyword>
<keyword id="KW-0813">Transport</keyword>
<organism>
    <name type="scientific">Mycoplasma pneumoniae (strain ATCC 29342 / M129 / Subtype 1)</name>
    <name type="common">Mycoplasmoides pneumoniae</name>
    <dbReference type="NCBI Taxonomy" id="272634"/>
    <lineage>
        <taxon>Bacteria</taxon>
        <taxon>Bacillati</taxon>
        <taxon>Mycoplasmatota</taxon>
        <taxon>Mycoplasmoidales</taxon>
        <taxon>Mycoplasmoidaceae</taxon>
        <taxon>Mycoplasmoides</taxon>
    </lineage>
</organism>
<gene>
    <name type="ordered locus">MPN_258</name>
    <name type="ORF">MP575</name>
</gene>
<evidence type="ECO:0000250" key="1"/>
<evidence type="ECO:0000255" key="2">
    <source>
        <dbReference type="PROSITE-ProRule" id="PRU00434"/>
    </source>
</evidence>
<evidence type="ECO:0000305" key="3"/>